<dbReference type="EMBL" id="AL021768">
    <property type="protein sequence ID" value="CAA16933.1"/>
    <property type="status" value="ALT_SEQ"/>
    <property type="molecule type" value="Genomic_DNA"/>
</dbReference>
<dbReference type="EMBL" id="AL161551">
    <property type="protein sequence ID" value="CAB78958.1"/>
    <property type="status" value="ALT_SEQ"/>
    <property type="molecule type" value="Genomic_DNA"/>
</dbReference>
<dbReference type="EMBL" id="CP002687">
    <property type="protein sequence ID" value="AEE84199.1"/>
    <property type="molecule type" value="Genomic_DNA"/>
</dbReference>
<dbReference type="EMBL" id="AK221363">
    <property type="protein sequence ID" value="BAD94239.1"/>
    <property type="molecule type" value="mRNA"/>
</dbReference>
<dbReference type="EMBL" id="AK221364">
    <property type="protein sequence ID" value="BAD94242.1"/>
    <property type="molecule type" value="mRNA"/>
</dbReference>
<dbReference type="PIR" id="T06149">
    <property type="entry name" value="T06149"/>
</dbReference>
<dbReference type="RefSeq" id="NP_193691.2">
    <property type="nucleotide sequence ID" value="NM_118076.3"/>
</dbReference>
<dbReference type="SMR" id="Q56YF8"/>
<dbReference type="FunCoup" id="Q56YF8">
    <property type="interactions" value="3555"/>
</dbReference>
<dbReference type="STRING" id="3702.Q56YF8"/>
<dbReference type="PaxDb" id="3702-AT4G19560.1"/>
<dbReference type="EnsemblPlants" id="AT4G19560.1">
    <property type="protein sequence ID" value="AT4G19560.1"/>
    <property type="gene ID" value="AT4G19560"/>
</dbReference>
<dbReference type="GeneID" id="827698"/>
<dbReference type="Gramene" id="AT4G19560.1">
    <property type="protein sequence ID" value="AT4G19560.1"/>
    <property type="gene ID" value="AT4G19560"/>
</dbReference>
<dbReference type="KEGG" id="ath:AT4G19560"/>
<dbReference type="Araport" id="AT4G19560"/>
<dbReference type="TAIR" id="AT4G19560">
    <property type="gene designation" value="CYCT1"/>
</dbReference>
<dbReference type="eggNOG" id="KOG0834">
    <property type="taxonomic scope" value="Eukaryota"/>
</dbReference>
<dbReference type="HOGENOM" id="CLU_022000_8_0_1"/>
<dbReference type="InParanoid" id="Q56YF8"/>
<dbReference type="OMA" id="DDEIIPW"/>
<dbReference type="PRO" id="PR:Q56YF8"/>
<dbReference type="Proteomes" id="UP000006548">
    <property type="component" value="Chromosome 4"/>
</dbReference>
<dbReference type="ExpressionAtlas" id="Q56YF8">
    <property type="expression patterns" value="baseline and differential"/>
</dbReference>
<dbReference type="GO" id="GO:0016538">
    <property type="term" value="F:cyclin-dependent protein serine/threonine kinase regulator activity"/>
    <property type="evidence" value="ECO:0007669"/>
    <property type="project" value="InterPro"/>
</dbReference>
<dbReference type="GO" id="GO:0051301">
    <property type="term" value="P:cell division"/>
    <property type="evidence" value="ECO:0007669"/>
    <property type="project" value="UniProtKB-KW"/>
</dbReference>
<dbReference type="GO" id="GO:0006357">
    <property type="term" value="P:regulation of transcription by RNA polymerase II"/>
    <property type="evidence" value="ECO:0007669"/>
    <property type="project" value="InterPro"/>
</dbReference>
<dbReference type="CDD" id="cd20587">
    <property type="entry name" value="CYCLIN_AcCycT_rpt1"/>
    <property type="match status" value="1"/>
</dbReference>
<dbReference type="CDD" id="cd20588">
    <property type="entry name" value="CYCLIN_AcCycT_rpt2"/>
    <property type="match status" value="1"/>
</dbReference>
<dbReference type="FunFam" id="1.10.472.10:FF:000026">
    <property type="entry name" value="Cyclin-T1-5 like"/>
    <property type="match status" value="1"/>
</dbReference>
<dbReference type="Gene3D" id="1.10.472.10">
    <property type="entry name" value="Cyclin-like"/>
    <property type="match status" value="2"/>
</dbReference>
<dbReference type="InterPro" id="IPR013763">
    <property type="entry name" value="Cyclin-like_dom"/>
</dbReference>
<dbReference type="InterPro" id="IPR036915">
    <property type="entry name" value="Cyclin-like_sf"/>
</dbReference>
<dbReference type="InterPro" id="IPR043198">
    <property type="entry name" value="Cyclin/Ssn8"/>
</dbReference>
<dbReference type="InterPro" id="IPR004367">
    <property type="entry name" value="Cyclin_C-dom"/>
</dbReference>
<dbReference type="InterPro" id="IPR006671">
    <property type="entry name" value="Cyclin_N"/>
</dbReference>
<dbReference type="PANTHER" id="PTHR10026">
    <property type="entry name" value="CYCLIN"/>
    <property type="match status" value="1"/>
</dbReference>
<dbReference type="Pfam" id="PF02984">
    <property type="entry name" value="Cyclin_C"/>
    <property type="match status" value="1"/>
</dbReference>
<dbReference type="Pfam" id="PF00134">
    <property type="entry name" value="Cyclin_N"/>
    <property type="match status" value="1"/>
</dbReference>
<dbReference type="SMART" id="SM00385">
    <property type="entry name" value="CYCLIN"/>
    <property type="match status" value="2"/>
</dbReference>
<dbReference type="SUPFAM" id="SSF47954">
    <property type="entry name" value="Cyclin-like"/>
    <property type="match status" value="2"/>
</dbReference>
<comment type="similarity">
    <text evidence="2">Belongs to the cyclin family. Cyclin T subfamily.</text>
</comment>
<comment type="sequence caution" evidence="2">
    <conflict type="erroneous gene model prediction">
        <sequence resource="EMBL-CDS" id="CAA16933"/>
    </conflict>
</comment>
<comment type="sequence caution" evidence="2">
    <conflict type="erroneous gene model prediction">
        <sequence resource="EMBL-CDS" id="CAB78958"/>
    </conflict>
</comment>
<sequence length="460" mass="51813">MDEALNENASGSESDASSVASNLHDDEIIPWFFSREEIERNSPSRRDGIDLKTETRLRDSYCTFLEILGERLKVPQVTIATAIFFCHRFFLRQSHAKNDRQTIATVCMLLAGKVEETPVTLEDVIIASYERIHKKDLAGAQRKEVYDQQKELVLIGEELVLSTLNFDLCISHPYKPLVEAIKKYMVEDAKTQLAQFAWNFVNDCLRTTLCLQYQPHHIAAGAILLAAELPTVDLQSYREVLCQEFDITPCQLEDIRGQILELYERIPTSQESKVESSGGVAVVHQPISRDMASTEKCPSSDIEGGSSQVNLSQSDDHSVHDGSRSEGIGEVNSESEAQKNLQDHSVGNIMVEKSDDVGVVQLKKDLQLHQEEVESKQEKDKKSFEKDITKIDLMDEKDLTESEVEDEINKTMQTGRQIFMKVEDPDDNMTVEHSEIRNANNSGVDDELVADTCLINDSDL</sequence>
<keyword id="KW-0131">Cell cycle</keyword>
<keyword id="KW-0132">Cell division</keyword>
<keyword id="KW-0195">Cyclin</keyword>
<keyword id="KW-1185">Reference proteome</keyword>
<organism>
    <name type="scientific">Arabidopsis thaliana</name>
    <name type="common">Mouse-ear cress</name>
    <dbReference type="NCBI Taxonomy" id="3702"/>
    <lineage>
        <taxon>Eukaryota</taxon>
        <taxon>Viridiplantae</taxon>
        <taxon>Streptophyta</taxon>
        <taxon>Embryophyta</taxon>
        <taxon>Tracheophyta</taxon>
        <taxon>Spermatophyta</taxon>
        <taxon>Magnoliopsida</taxon>
        <taxon>eudicotyledons</taxon>
        <taxon>Gunneridae</taxon>
        <taxon>Pentapetalae</taxon>
        <taxon>rosids</taxon>
        <taxon>malvids</taxon>
        <taxon>Brassicales</taxon>
        <taxon>Brassicaceae</taxon>
        <taxon>Camelineae</taxon>
        <taxon>Arabidopsis</taxon>
    </lineage>
</organism>
<feature type="chain" id="PRO_0000287054" description="Cyclin-T1-2">
    <location>
        <begin position="1"/>
        <end position="460"/>
    </location>
</feature>
<feature type="region of interest" description="Disordered" evidence="1">
    <location>
        <begin position="1"/>
        <end position="20"/>
    </location>
</feature>
<feature type="region of interest" description="Disordered" evidence="1">
    <location>
        <begin position="285"/>
        <end position="345"/>
    </location>
</feature>
<feature type="compositionally biased region" description="Basic and acidic residues" evidence="1">
    <location>
        <begin position="314"/>
        <end position="324"/>
    </location>
</feature>
<feature type="compositionally biased region" description="Polar residues" evidence="1">
    <location>
        <begin position="332"/>
        <end position="345"/>
    </location>
</feature>
<feature type="sequence conflict" description="In Ref. 3; BAD94239/BAD94242." evidence="2" ref="3">
    <original>Q</original>
    <variation>H</variation>
    <location>
        <position position="313"/>
    </location>
</feature>
<gene>
    <name type="primary">CYCT1-2</name>
    <name type="ordered locus">At4g19560</name>
    <name type="ORF">F24J7.120</name>
</gene>
<accession>Q56YF8</accession>
<accession>O49474</accession>
<protein>
    <recommendedName>
        <fullName>Cyclin-T1-2</fullName>
        <shortName>CycT1;2</shortName>
    </recommendedName>
</protein>
<name>CCT12_ARATH</name>
<reference key="1">
    <citation type="journal article" date="1999" name="Nature">
        <title>Sequence and analysis of chromosome 4 of the plant Arabidopsis thaliana.</title>
        <authorList>
            <person name="Mayer K.F.X."/>
            <person name="Schueller C."/>
            <person name="Wambutt R."/>
            <person name="Murphy G."/>
            <person name="Volckaert G."/>
            <person name="Pohl T."/>
            <person name="Duesterhoeft A."/>
            <person name="Stiekema W."/>
            <person name="Entian K.-D."/>
            <person name="Terryn N."/>
            <person name="Harris B."/>
            <person name="Ansorge W."/>
            <person name="Brandt P."/>
            <person name="Grivell L.A."/>
            <person name="Rieger M."/>
            <person name="Weichselgartner M."/>
            <person name="de Simone V."/>
            <person name="Obermaier B."/>
            <person name="Mache R."/>
            <person name="Mueller M."/>
            <person name="Kreis M."/>
            <person name="Delseny M."/>
            <person name="Puigdomenech P."/>
            <person name="Watson M."/>
            <person name="Schmidtheini T."/>
            <person name="Reichert B."/>
            <person name="Portetelle D."/>
            <person name="Perez-Alonso M."/>
            <person name="Boutry M."/>
            <person name="Bancroft I."/>
            <person name="Vos P."/>
            <person name="Hoheisel J."/>
            <person name="Zimmermann W."/>
            <person name="Wedler H."/>
            <person name="Ridley P."/>
            <person name="Langham S.-A."/>
            <person name="McCullagh B."/>
            <person name="Bilham L."/>
            <person name="Robben J."/>
            <person name="van der Schueren J."/>
            <person name="Grymonprez B."/>
            <person name="Chuang Y.-J."/>
            <person name="Vandenbussche F."/>
            <person name="Braeken M."/>
            <person name="Weltjens I."/>
            <person name="Voet M."/>
            <person name="Bastiaens I."/>
            <person name="Aert R."/>
            <person name="Defoor E."/>
            <person name="Weitzenegger T."/>
            <person name="Bothe G."/>
            <person name="Ramsperger U."/>
            <person name="Hilbert H."/>
            <person name="Braun M."/>
            <person name="Holzer E."/>
            <person name="Brandt A."/>
            <person name="Peters S."/>
            <person name="van Staveren M."/>
            <person name="Dirkse W."/>
            <person name="Mooijman P."/>
            <person name="Klein Lankhorst R."/>
            <person name="Rose M."/>
            <person name="Hauf J."/>
            <person name="Koetter P."/>
            <person name="Berneiser S."/>
            <person name="Hempel S."/>
            <person name="Feldpausch M."/>
            <person name="Lamberth S."/>
            <person name="Van den Daele H."/>
            <person name="De Keyser A."/>
            <person name="Buysshaert C."/>
            <person name="Gielen J."/>
            <person name="Villarroel R."/>
            <person name="De Clercq R."/>
            <person name="van Montagu M."/>
            <person name="Rogers J."/>
            <person name="Cronin A."/>
            <person name="Quail M.A."/>
            <person name="Bray-Allen S."/>
            <person name="Clark L."/>
            <person name="Doggett J."/>
            <person name="Hall S."/>
            <person name="Kay M."/>
            <person name="Lennard N."/>
            <person name="McLay K."/>
            <person name="Mayes R."/>
            <person name="Pettett A."/>
            <person name="Rajandream M.A."/>
            <person name="Lyne M."/>
            <person name="Benes V."/>
            <person name="Rechmann S."/>
            <person name="Borkova D."/>
            <person name="Bloecker H."/>
            <person name="Scharfe M."/>
            <person name="Grimm M."/>
            <person name="Loehnert T.-H."/>
            <person name="Dose S."/>
            <person name="de Haan M."/>
            <person name="Maarse A.C."/>
            <person name="Schaefer M."/>
            <person name="Mueller-Auer S."/>
            <person name="Gabel C."/>
            <person name="Fuchs M."/>
            <person name="Fartmann B."/>
            <person name="Granderath K."/>
            <person name="Dauner D."/>
            <person name="Herzl A."/>
            <person name="Neumann S."/>
            <person name="Argiriou A."/>
            <person name="Vitale D."/>
            <person name="Liguori R."/>
            <person name="Piravandi E."/>
            <person name="Massenet O."/>
            <person name="Quigley F."/>
            <person name="Clabauld G."/>
            <person name="Muendlein A."/>
            <person name="Felber R."/>
            <person name="Schnabl S."/>
            <person name="Hiller R."/>
            <person name="Schmidt W."/>
            <person name="Lecharny A."/>
            <person name="Aubourg S."/>
            <person name="Chefdor F."/>
            <person name="Cooke R."/>
            <person name="Berger C."/>
            <person name="Monfort A."/>
            <person name="Casacuberta E."/>
            <person name="Gibbons T."/>
            <person name="Weber N."/>
            <person name="Vandenbol M."/>
            <person name="Bargues M."/>
            <person name="Terol J."/>
            <person name="Torres A."/>
            <person name="Perez-Perez A."/>
            <person name="Purnelle B."/>
            <person name="Bent E."/>
            <person name="Johnson S."/>
            <person name="Tacon D."/>
            <person name="Jesse T."/>
            <person name="Heijnen L."/>
            <person name="Schwarz S."/>
            <person name="Scholler P."/>
            <person name="Heber S."/>
            <person name="Francs P."/>
            <person name="Bielke C."/>
            <person name="Frishman D."/>
            <person name="Haase D."/>
            <person name="Lemcke K."/>
            <person name="Mewes H.-W."/>
            <person name="Stocker S."/>
            <person name="Zaccaria P."/>
            <person name="Bevan M."/>
            <person name="Wilson R.K."/>
            <person name="de la Bastide M."/>
            <person name="Habermann K."/>
            <person name="Parnell L."/>
            <person name="Dedhia N."/>
            <person name="Gnoj L."/>
            <person name="Schutz K."/>
            <person name="Huang E."/>
            <person name="Spiegel L."/>
            <person name="Sekhon M."/>
            <person name="Murray J."/>
            <person name="Sheet P."/>
            <person name="Cordes M."/>
            <person name="Abu-Threideh J."/>
            <person name="Stoneking T."/>
            <person name="Kalicki J."/>
            <person name="Graves T."/>
            <person name="Harmon G."/>
            <person name="Edwards J."/>
            <person name="Latreille P."/>
            <person name="Courtney L."/>
            <person name="Cloud J."/>
            <person name="Abbott A."/>
            <person name="Scott K."/>
            <person name="Johnson D."/>
            <person name="Minx P."/>
            <person name="Bentley D."/>
            <person name="Fulton B."/>
            <person name="Miller N."/>
            <person name="Greco T."/>
            <person name="Kemp K."/>
            <person name="Kramer J."/>
            <person name="Fulton L."/>
            <person name="Mardis E."/>
            <person name="Dante M."/>
            <person name="Pepin K."/>
            <person name="Hillier L.W."/>
            <person name="Nelson J."/>
            <person name="Spieth J."/>
            <person name="Ryan E."/>
            <person name="Andrews S."/>
            <person name="Geisel C."/>
            <person name="Layman D."/>
            <person name="Du H."/>
            <person name="Ali J."/>
            <person name="Berghoff A."/>
            <person name="Jones K."/>
            <person name="Drone K."/>
            <person name="Cotton M."/>
            <person name="Joshu C."/>
            <person name="Antonoiu B."/>
            <person name="Zidanic M."/>
            <person name="Strong C."/>
            <person name="Sun H."/>
            <person name="Lamar B."/>
            <person name="Yordan C."/>
            <person name="Ma P."/>
            <person name="Zhong J."/>
            <person name="Preston R."/>
            <person name="Vil D."/>
            <person name="Shekher M."/>
            <person name="Matero A."/>
            <person name="Shah R."/>
            <person name="Swaby I.K."/>
            <person name="O'Shaughnessy A."/>
            <person name="Rodriguez M."/>
            <person name="Hoffman J."/>
            <person name="Till S."/>
            <person name="Granat S."/>
            <person name="Shohdy N."/>
            <person name="Hasegawa A."/>
            <person name="Hameed A."/>
            <person name="Lodhi M."/>
            <person name="Johnson A."/>
            <person name="Chen E."/>
            <person name="Marra M.A."/>
            <person name="Martienssen R."/>
            <person name="McCombie W.R."/>
        </authorList>
    </citation>
    <scope>NUCLEOTIDE SEQUENCE [LARGE SCALE GENOMIC DNA]</scope>
    <source>
        <strain>cv. Columbia</strain>
    </source>
</reference>
<reference key="2">
    <citation type="journal article" date="2017" name="Plant J.">
        <title>Araport11: a complete reannotation of the Arabidopsis thaliana reference genome.</title>
        <authorList>
            <person name="Cheng C.Y."/>
            <person name="Krishnakumar V."/>
            <person name="Chan A.P."/>
            <person name="Thibaud-Nissen F."/>
            <person name="Schobel S."/>
            <person name="Town C.D."/>
        </authorList>
    </citation>
    <scope>GENOME REANNOTATION</scope>
    <source>
        <strain>cv. Columbia</strain>
    </source>
</reference>
<reference key="3">
    <citation type="submission" date="2005-03" db="EMBL/GenBank/DDBJ databases">
        <title>Large-scale analysis of RIKEN Arabidopsis full-length (RAFL) cDNAs.</title>
        <authorList>
            <person name="Totoki Y."/>
            <person name="Seki M."/>
            <person name="Ishida J."/>
            <person name="Nakajima M."/>
            <person name="Enju A."/>
            <person name="Kamiya A."/>
            <person name="Narusaka M."/>
            <person name="Shin-i T."/>
            <person name="Nakagawa M."/>
            <person name="Sakamoto N."/>
            <person name="Oishi K."/>
            <person name="Kohara Y."/>
            <person name="Kobayashi M."/>
            <person name="Toyoda A."/>
            <person name="Sakaki Y."/>
            <person name="Sakurai T."/>
            <person name="Iida K."/>
            <person name="Akiyama K."/>
            <person name="Satou M."/>
            <person name="Toyoda T."/>
            <person name="Konagaya A."/>
            <person name="Carninci P."/>
            <person name="Kawai J."/>
            <person name="Hayashizaki Y."/>
            <person name="Shinozaki K."/>
        </authorList>
    </citation>
    <scope>NUCLEOTIDE SEQUENCE [LARGE SCALE MRNA]</scope>
    <source>
        <strain>cv. Columbia</strain>
    </source>
</reference>
<reference key="4">
    <citation type="journal article" date="2004" name="Plant Physiol.">
        <title>Genome-wide analysis of the cyclin family in Arabidopsis and comparative phylogenetic analysis of plant cyclin-like proteins.</title>
        <authorList>
            <person name="Wang G."/>
            <person name="Kong H."/>
            <person name="Sun Y."/>
            <person name="Zhang X."/>
            <person name="Zhang W."/>
            <person name="Altman N."/>
            <person name="dePamphilis C.W."/>
            <person name="Ma H."/>
        </authorList>
    </citation>
    <scope>GENE FAMILY</scope>
    <scope>NOMENCLATURE</scope>
</reference>
<proteinExistence type="evidence at transcript level"/>
<evidence type="ECO:0000256" key="1">
    <source>
        <dbReference type="SAM" id="MobiDB-lite"/>
    </source>
</evidence>
<evidence type="ECO:0000305" key="2"/>